<sequence>MLSTSTSLQGGKVSREEYRRQKDLEAARKAGTAPAALDEQGNAINPHIPEYITKAPWYADTGRPSLAHQRINEQGPHLKLDEWYDRGAKAGPAAKKYRKGACENCGAMTHKMKDCVERPRKRGAKFTNKDIAPDELVQQFEGDYDAKRDRWNGYDPASYKHVVEEYEATEQMRKKYREEEIDQQTSTDMAVVKKLAKKDKEGKVEDDDDDFGSSDEDEDDEDKYADAADQVGQKLDTKTRITVRNLRIREDTAKYLINLDESSAYYDPKTRSMRDAPVRNMNPEDMKFAGDNFQRYSGDATNMQKLQLFAWQSAQKGSNINVSANPTAGELLHREFQQKKEVLKDTNKTSILAKYGGEEHLQRMPNELLSGQTENYVEYSRSGQIIKGRERAKARSKYDEDVYINNHTAIWGSYYDLSTSQWGFACCHSVLPGSYCTGDAGKLANAASSASALLASSNERSKIEEAAEKERESLAEQHLKDLASGKAKKGKEREWDLPQYAKRREDGEELDLDKGRLKNALKEEKKRKKMGEDEAWQQTKKGKTDVTQEELEAYRLSRQAYDDPMSNYQDPEDQ</sequence>
<gene>
    <name type="primary">SLU7</name>
    <name type="ordered locus">CNBD3490</name>
</gene>
<accession>P0CR53</accession>
<accession>Q55TV4</accession>
<accession>Q5KII3</accession>
<comment type="function">
    <text evidence="1">Involved in pre-mRNA splicing.</text>
</comment>
<comment type="subunit">
    <text evidence="1">Associated with the spliceosome.</text>
</comment>
<comment type="subcellular location">
    <subcellularLocation>
        <location evidence="1">Nucleus</location>
    </subcellularLocation>
</comment>
<comment type="similarity">
    <text evidence="3">Belongs to the SLU7 family.</text>
</comment>
<protein>
    <recommendedName>
        <fullName>Pre-mRNA-splicing factor SLU7</fullName>
    </recommendedName>
</protein>
<evidence type="ECO:0000250" key="1"/>
<evidence type="ECO:0000256" key="2">
    <source>
        <dbReference type="SAM" id="MobiDB-lite"/>
    </source>
</evidence>
<evidence type="ECO:0000305" key="3"/>
<keyword id="KW-0479">Metal-binding</keyword>
<keyword id="KW-0507">mRNA processing</keyword>
<keyword id="KW-0508">mRNA splicing</keyword>
<keyword id="KW-0539">Nucleus</keyword>
<keyword id="KW-0747">Spliceosome</keyword>
<keyword id="KW-0862">Zinc</keyword>
<keyword id="KW-0863">Zinc-finger</keyword>
<reference key="1">
    <citation type="journal article" date="2005" name="Science">
        <title>The genome of the basidiomycetous yeast and human pathogen Cryptococcus neoformans.</title>
        <authorList>
            <person name="Loftus B.J."/>
            <person name="Fung E."/>
            <person name="Roncaglia P."/>
            <person name="Rowley D."/>
            <person name="Amedeo P."/>
            <person name="Bruno D."/>
            <person name="Vamathevan J."/>
            <person name="Miranda M."/>
            <person name="Anderson I.J."/>
            <person name="Fraser J.A."/>
            <person name="Allen J.E."/>
            <person name="Bosdet I.E."/>
            <person name="Brent M.R."/>
            <person name="Chiu R."/>
            <person name="Doering T.L."/>
            <person name="Donlin M.J."/>
            <person name="D'Souza C.A."/>
            <person name="Fox D.S."/>
            <person name="Grinberg V."/>
            <person name="Fu J."/>
            <person name="Fukushima M."/>
            <person name="Haas B.J."/>
            <person name="Huang J.C."/>
            <person name="Janbon G."/>
            <person name="Jones S.J.M."/>
            <person name="Koo H.L."/>
            <person name="Krzywinski M.I."/>
            <person name="Kwon-Chung K.J."/>
            <person name="Lengeler K.B."/>
            <person name="Maiti R."/>
            <person name="Marra M.A."/>
            <person name="Marra R.E."/>
            <person name="Mathewson C.A."/>
            <person name="Mitchell T.G."/>
            <person name="Pertea M."/>
            <person name="Riggs F.R."/>
            <person name="Salzberg S.L."/>
            <person name="Schein J.E."/>
            <person name="Shvartsbeyn A."/>
            <person name="Shin H."/>
            <person name="Shumway M."/>
            <person name="Specht C.A."/>
            <person name="Suh B.B."/>
            <person name="Tenney A."/>
            <person name="Utterback T.R."/>
            <person name="Wickes B.L."/>
            <person name="Wortman J.R."/>
            <person name="Wye N.H."/>
            <person name="Kronstad J.W."/>
            <person name="Lodge J.K."/>
            <person name="Heitman J."/>
            <person name="Davis R.W."/>
            <person name="Fraser C.M."/>
            <person name="Hyman R.W."/>
        </authorList>
    </citation>
    <scope>NUCLEOTIDE SEQUENCE [LARGE SCALE GENOMIC DNA]</scope>
    <source>
        <strain>B-3501A</strain>
    </source>
</reference>
<proteinExistence type="inferred from homology"/>
<organism>
    <name type="scientific">Cryptococcus neoformans var. neoformans serotype D (strain B-3501A)</name>
    <name type="common">Filobasidiella neoformans</name>
    <dbReference type="NCBI Taxonomy" id="283643"/>
    <lineage>
        <taxon>Eukaryota</taxon>
        <taxon>Fungi</taxon>
        <taxon>Dikarya</taxon>
        <taxon>Basidiomycota</taxon>
        <taxon>Agaricomycotina</taxon>
        <taxon>Tremellomycetes</taxon>
        <taxon>Tremellales</taxon>
        <taxon>Cryptococcaceae</taxon>
        <taxon>Cryptococcus</taxon>
        <taxon>Cryptococcus neoformans species complex</taxon>
    </lineage>
</organism>
<dbReference type="EMBL" id="AAEY01000020">
    <property type="protein sequence ID" value="EAL21295.1"/>
    <property type="molecule type" value="Genomic_DNA"/>
</dbReference>
<dbReference type="RefSeq" id="XP_775942.1">
    <property type="nucleotide sequence ID" value="XM_770849.1"/>
</dbReference>
<dbReference type="SMR" id="P0CR53"/>
<dbReference type="EnsemblFungi" id="AAW43157">
    <property type="protein sequence ID" value="AAW43157"/>
    <property type="gene ID" value="CND02870"/>
</dbReference>
<dbReference type="GeneID" id="4935738"/>
<dbReference type="KEGG" id="cnb:CNBD3490"/>
<dbReference type="VEuPathDB" id="FungiDB:CNBD3490"/>
<dbReference type="HOGENOM" id="CLU_019317_2_0_1"/>
<dbReference type="OrthoDB" id="5809at5206"/>
<dbReference type="GO" id="GO:0005681">
    <property type="term" value="C:spliceosomal complex"/>
    <property type="evidence" value="ECO:0007669"/>
    <property type="project" value="UniProtKB-KW"/>
</dbReference>
<dbReference type="GO" id="GO:0030628">
    <property type="term" value="F:pre-mRNA 3'-splice site binding"/>
    <property type="evidence" value="ECO:0007669"/>
    <property type="project" value="InterPro"/>
</dbReference>
<dbReference type="GO" id="GO:0008270">
    <property type="term" value="F:zinc ion binding"/>
    <property type="evidence" value="ECO:0007669"/>
    <property type="project" value="UniProtKB-KW"/>
</dbReference>
<dbReference type="GO" id="GO:0000398">
    <property type="term" value="P:mRNA splicing, via spliceosome"/>
    <property type="evidence" value="ECO:0007669"/>
    <property type="project" value="InterPro"/>
</dbReference>
<dbReference type="InterPro" id="IPR021715">
    <property type="entry name" value="Slu7_dom"/>
</dbReference>
<dbReference type="InterPro" id="IPR039974">
    <property type="entry name" value="Splicing_factor_SLU7"/>
</dbReference>
<dbReference type="PANTHER" id="PTHR12942:SF2">
    <property type="entry name" value="PRE-MRNA-SPLICING FACTOR SLU7"/>
    <property type="match status" value="1"/>
</dbReference>
<dbReference type="PANTHER" id="PTHR12942">
    <property type="entry name" value="STEP II SPLICING FACTOR SLU7"/>
    <property type="match status" value="1"/>
</dbReference>
<dbReference type="Pfam" id="PF11708">
    <property type="entry name" value="Slu7"/>
    <property type="match status" value="1"/>
</dbReference>
<feature type="chain" id="PRO_0000410288" description="Pre-mRNA-splicing factor SLU7">
    <location>
        <begin position="1"/>
        <end position="574"/>
    </location>
</feature>
<feature type="zinc finger region" description="CCHC-type">
    <location>
        <begin position="100"/>
        <end position="117"/>
    </location>
</feature>
<feature type="region of interest" description="Disordered" evidence="2">
    <location>
        <begin position="1"/>
        <end position="42"/>
    </location>
</feature>
<feature type="region of interest" description="Disordered" evidence="2">
    <location>
        <begin position="195"/>
        <end position="231"/>
    </location>
</feature>
<feature type="region of interest" description="Disordered" evidence="2">
    <location>
        <begin position="481"/>
        <end position="548"/>
    </location>
</feature>
<feature type="region of interest" description="Disordered" evidence="2">
    <location>
        <begin position="555"/>
        <end position="574"/>
    </location>
</feature>
<feature type="compositionally biased region" description="Basic and acidic residues" evidence="2">
    <location>
        <begin position="13"/>
        <end position="28"/>
    </location>
</feature>
<feature type="compositionally biased region" description="Acidic residues" evidence="2">
    <location>
        <begin position="204"/>
        <end position="223"/>
    </location>
</feature>
<feature type="compositionally biased region" description="Basic and acidic residues" evidence="2">
    <location>
        <begin position="491"/>
        <end position="524"/>
    </location>
</feature>
<name>SLU7_CRYNB</name>